<sequence length="512" mass="55681">MTLPEPLFRMEGISKRYGGAVALKDADIAIRPGAIHAVLGENGAGKSTLIKIMAGVVAPDEGRMLLDGKEIAFASPAAANAAGIVCVFQELSLIPDLSVADNIVISNPPLKFGMIDRRRQRRIAEEALARAGASDIHPSALVKDLPLSRRQMVEIAKALARKPRLMILDEATSALTQSDVEKVFTMLKRLRAEGMALIYISHRMHEIAQLADECTVFRNGRSIESYPAGTKTDQQVVELMIGREYSNVFPPKPAHRGEVMPVLSCRDLSWGDRLSGITFDIRPGEIIGVGGLDGQGQRELLLALFGVLRDVKGEVVIDGRPVTLKSPRDAKSGGISMALIPEDRKTEGLMLPMTVRENLSIAALDRVSRNGVIDRAAERREIDDLFKLLAIKAATIDMPVAALSGGNQQKVVIAKWLMNRPRIILLNDPTRGIDVGTKQEIYLLLRKLADAGAAIIFYSTDYDELIGCCDRVLVMYDGSIIRQLEGAEINEHELIGAALNIAGDHAAQRIAP</sequence>
<protein>
    <recommendedName>
        <fullName evidence="1">Ribose import ATP-binding protein RbsA 1</fullName>
        <ecNumber evidence="1">7.5.2.7</ecNumber>
    </recommendedName>
</protein>
<evidence type="ECO:0000255" key="1">
    <source>
        <dbReference type="HAMAP-Rule" id="MF_01716"/>
    </source>
</evidence>
<evidence type="ECO:0000305" key="2"/>
<feature type="chain" id="PRO_0000261083" description="Ribose import ATP-binding protein RbsA 1">
    <location>
        <begin position="1"/>
        <end position="512"/>
    </location>
</feature>
<feature type="domain" description="ABC transporter 1" evidence="1">
    <location>
        <begin position="8"/>
        <end position="244"/>
    </location>
</feature>
<feature type="domain" description="ABC transporter 2" evidence="1">
    <location>
        <begin position="254"/>
        <end position="502"/>
    </location>
</feature>
<feature type="binding site" evidence="1">
    <location>
        <begin position="40"/>
        <end position="47"/>
    </location>
    <ligand>
        <name>ATP</name>
        <dbReference type="ChEBI" id="CHEBI:30616"/>
    </ligand>
</feature>
<accession>Q1MHS1</accession>
<comment type="function">
    <text evidence="1">Part of the ABC transporter complex RbsABC involved in ribose import. Responsible for energy coupling to the transport system.</text>
</comment>
<comment type="catalytic activity">
    <reaction evidence="1">
        <text>D-ribose(out) + ATP + H2O = D-ribose(in) + ADP + phosphate + H(+)</text>
        <dbReference type="Rhea" id="RHEA:29903"/>
        <dbReference type="ChEBI" id="CHEBI:15377"/>
        <dbReference type="ChEBI" id="CHEBI:15378"/>
        <dbReference type="ChEBI" id="CHEBI:30616"/>
        <dbReference type="ChEBI" id="CHEBI:43474"/>
        <dbReference type="ChEBI" id="CHEBI:47013"/>
        <dbReference type="ChEBI" id="CHEBI:456216"/>
        <dbReference type="EC" id="7.5.2.7"/>
    </reaction>
</comment>
<comment type="subunit">
    <text evidence="1">The complex is composed of an ATP-binding protein (RbsA), two transmembrane proteins (RbsC) and a solute-binding protein (RbsB).</text>
</comment>
<comment type="subcellular location">
    <subcellularLocation>
        <location evidence="1">Cell inner membrane</location>
        <topology evidence="1">Peripheral membrane protein</topology>
    </subcellularLocation>
</comment>
<comment type="similarity">
    <text evidence="1">Belongs to the ABC transporter superfamily. Ribose importer (TC 3.A.1.2.1) family.</text>
</comment>
<comment type="sequence caution" evidence="2">
    <conflict type="erroneous initiation">
        <sequence resource="EMBL-CDS" id="CAK07490"/>
    </conflict>
</comment>
<reference key="1">
    <citation type="journal article" date="2006" name="Genome Biol.">
        <title>The genome of Rhizobium leguminosarum has recognizable core and accessory components.</title>
        <authorList>
            <person name="Young J.P.W."/>
            <person name="Crossman L.C."/>
            <person name="Johnston A.W.B."/>
            <person name="Thomson N.R."/>
            <person name="Ghazoui Z.F."/>
            <person name="Hull K.H."/>
            <person name="Wexler M."/>
            <person name="Curson A.R.J."/>
            <person name="Todd J.D."/>
            <person name="Poole P.S."/>
            <person name="Mauchline T.H."/>
            <person name="East A.K."/>
            <person name="Quail M.A."/>
            <person name="Churcher C."/>
            <person name="Arrowsmith C."/>
            <person name="Cherevach I."/>
            <person name="Chillingworth T."/>
            <person name="Clarke K."/>
            <person name="Cronin A."/>
            <person name="Davis P."/>
            <person name="Fraser A."/>
            <person name="Hance Z."/>
            <person name="Hauser H."/>
            <person name="Jagels K."/>
            <person name="Moule S."/>
            <person name="Mungall K."/>
            <person name="Norbertczak H."/>
            <person name="Rabbinowitsch E."/>
            <person name="Sanders M."/>
            <person name="Simmonds M."/>
            <person name="Whitehead S."/>
            <person name="Parkhill J."/>
        </authorList>
    </citation>
    <scope>NUCLEOTIDE SEQUENCE [LARGE SCALE GENOMIC DNA]</scope>
    <source>
        <strain>DSM 114642 / LMG 32736 / 3841</strain>
    </source>
</reference>
<proteinExistence type="inferred from homology"/>
<organism>
    <name type="scientific">Rhizobium johnstonii (strain DSM 114642 / LMG 32736 / 3841)</name>
    <name type="common">Rhizobium leguminosarum bv. viciae</name>
    <dbReference type="NCBI Taxonomy" id="216596"/>
    <lineage>
        <taxon>Bacteria</taxon>
        <taxon>Pseudomonadati</taxon>
        <taxon>Pseudomonadota</taxon>
        <taxon>Alphaproteobacteria</taxon>
        <taxon>Hyphomicrobiales</taxon>
        <taxon>Rhizobiaceae</taxon>
        <taxon>Rhizobium/Agrobacterium group</taxon>
        <taxon>Rhizobium</taxon>
        <taxon>Rhizobium johnstonii</taxon>
    </lineage>
</organism>
<name>RBSA1_RHIJ3</name>
<keyword id="KW-0067">ATP-binding</keyword>
<keyword id="KW-0997">Cell inner membrane</keyword>
<keyword id="KW-1003">Cell membrane</keyword>
<keyword id="KW-0472">Membrane</keyword>
<keyword id="KW-0547">Nucleotide-binding</keyword>
<keyword id="KW-0677">Repeat</keyword>
<keyword id="KW-0762">Sugar transport</keyword>
<keyword id="KW-1278">Translocase</keyword>
<keyword id="KW-0813">Transport</keyword>
<gene>
    <name evidence="1" type="primary">rbsA1</name>
    <name type="ordered locus">RL1997</name>
</gene>
<dbReference type="EC" id="7.5.2.7" evidence="1"/>
<dbReference type="EMBL" id="AM236080">
    <property type="protein sequence ID" value="CAK07490.1"/>
    <property type="status" value="ALT_INIT"/>
    <property type="molecule type" value="Genomic_DNA"/>
</dbReference>
<dbReference type="RefSeq" id="WP_041936284.1">
    <property type="nucleotide sequence ID" value="NC_008380.1"/>
</dbReference>
<dbReference type="SMR" id="Q1MHS1"/>
<dbReference type="EnsemblBacteria" id="CAK07490">
    <property type="protein sequence ID" value="CAK07490"/>
    <property type="gene ID" value="RL1997"/>
</dbReference>
<dbReference type="KEGG" id="rle:RL1997"/>
<dbReference type="eggNOG" id="COG1129">
    <property type="taxonomic scope" value="Bacteria"/>
</dbReference>
<dbReference type="HOGENOM" id="CLU_000604_92_2_5"/>
<dbReference type="Proteomes" id="UP000006575">
    <property type="component" value="Chromosome"/>
</dbReference>
<dbReference type="GO" id="GO:0005886">
    <property type="term" value="C:plasma membrane"/>
    <property type="evidence" value="ECO:0007669"/>
    <property type="project" value="UniProtKB-SubCell"/>
</dbReference>
<dbReference type="GO" id="GO:0015611">
    <property type="term" value="F:ABC-type D-ribose transporter activity"/>
    <property type="evidence" value="ECO:0007669"/>
    <property type="project" value="UniProtKB-EC"/>
</dbReference>
<dbReference type="GO" id="GO:0005524">
    <property type="term" value="F:ATP binding"/>
    <property type="evidence" value="ECO:0007669"/>
    <property type="project" value="UniProtKB-KW"/>
</dbReference>
<dbReference type="GO" id="GO:0016887">
    <property type="term" value="F:ATP hydrolysis activity"/>
    <property type="evidence" value="ECO:0007669"/>
    <property type="project" value="InterPro"/>
</dbReference>
<dbReference type="CDD" id="cd03216">
    <property type="entry name" value="ABC_Carb_Monos_I"/>
    <property type="match status" value="1"/>
</dbReference>
<dbReference type="CDD" id="cd03215">
    <property type="entry name" value="ABC_Carb_Monos_II"/>
    <property type="match status" value="1"/>
</dbReference>
<dbReference type="Gene3D" id="3.40.50.300">
    <property type="entry name" value="P-loop containing nucleotide triphosphate hydrolases"/>
    <property type="match status" value="2"/>
</dbReference>
<dbReference type="InterPro" id="IPR003593">
    <property type="entry name" value="AAA+_ATPase"/>
</dbReference>
<dbReference type="InterPro" id="IPR050107">
    <property type="entry name" value="ABC_carbohydrate_import_ATPase"/>
</dbReference>
<dbReference type="InterPro" id="IPR003439">
    <property type="entry name" value="ABC_transporter-like_ATP-bd"/>
</dbReference>
<dbReference type="InterPro" id="IPR017871">
    <property type="entry name" value="ABC_transporter-like_CS"/>
</dbReference>
<dbReference type="InterPro" id="IPR027417">
    <property type="entry name" value="P-loop_NTPase"/>
</dbReference>
<dbReference type="PANTHER" id="PTHR43790">
    <property type="entry name" value="CARBOHYDRATE TRANSPORT ATP-BINDING PROTEIN MG119-RELATED"/>
    <property type="match status" value="1"/>
</dbReference>
<dbReference type="PANTHER" id="PTHR43790:SF9">
    <property type="entry name" value="GALACTOFURANOSE TRANSPORTER ATP-BINDING PROTEIN YTFR"/>
    <property type="match status" value="1"/>
</dbReference>
<dbReference type="Pfam" id="PF00005">
    <property type="entry name" value="ABC_tran"/>
    <property type="match status" value="2"/>
</dbReference>
<dbReference type="SMART" id="SM00382">
    <property type="entry name" value="AAA"/>
    <property type="match status" value="1"/>
</dbReference>
<dbReference type="SUPFAM" id="SSF52540">
    <property type="entry name" value="P-loop containing nucleoside triphosphate hydrolases"/>
    <property type="match status" value="2"/>
</dbReference>
<dbReference type="PROSITE" id="PS00211">
    <property type="entry name" value="ABC_TRANSPORTER_1"/>
    <property type="match status" value="1"/>
</dbReference>
<dbReference type="PROSITE" id="PS50893">
    <property type="entry name" value="ABC_TRANSPORTER_2"/>
    <property type="match status" value="2"/>
</dbReference>
<dbReference type="PROSITE" id="PS51254">
    <property type="entry name" value="RBSA"/>
    <property type="match status" value="1"/>
</dbReference>